<protein>
    <recommendedName>
        <fullName evidence="1">Sulfate transporter CysZ</fullName>
    </recommendedName>
</protein>
<organism>
    <name type="scientific">Vibrio parahaemolyticus serotype O3:K6 (strain RIMD 2210633)</name>
    <dbReference type="NCBI Taxonomy" id="223926"/>
    <lineage>
        <taxon>Bacteria</taxon>
        <taxon>Pseudomonadati</taxon>
        <taxon>Pseudomonadota</taxon>
        <taxon>Gammaproteobacteria</taxon>
        <taxon>Vibrionales</taxon>
        <taxon>Vibrionaceae</taxon>
        <taxon>Vibrio</taxon>
    </lineage>
</organism>
<feature type="chain" id="PRO_0000204352" description="Sulfate transporter CysZ">
    <location>
        <begin position="1"/>
        <end position="247"/>
    </location>
</feature>
<feature type="transmembrane region" description="Helical" evidence="1">
    <location>
        <begin position="29"/>
        <end position="49"/>
    </location>
</feature>
<feature type="transmembrane region" description="Helical" evidence="1">
    <location>
        <begin position="66"/>
        <end position="86"/>
    </location>
</feature>
<feature type="transmembrane region" description="Helical" evidence="1">
    <location>
        <begin position="141"/>
        <end position="160"/>
    </location>
</feature>
<feature type="transmembrane region" description="Helical" evidence="1">
    <location>
        <begin position="164"/>
        <end position="186"/>
    </location>
</feature>
<feature type="transmembrane region" description="Helical" evidence="1">
    <location>
        <begin position="212"/>
        <end position="232"/>
    </location>
</feature>
<proteinExistence type="inferred from homology"/>
<dbReference type="EMBL" id="BA000031">
    <property type="protein sequence ID" value="BAC59061.1"/>
    <property type="molecule type" value="Genomic_DNA"/>
</dbReference>
<dbReference type="RefSeq" id="NP_797177.1">
    <property type="nucleotide sequence ID" value="NC_004603.1"/>
</dbReference>
<dbReference type="RefSeq" id="WP_005489850.1">
    <property type="nucleotide sequence ID" value="NC_004603.1"/>
</dbReference>
<dbReference type="SMR" id="Q87RJ6"/>
<dbReference type="DNASU" id="1188295"/>
<dbReference type="GeneID" id="1188295"/>
<dbReference type="KEGG" id="vpa:VP0798"/>
<dbReference type="PATRIC" id="fig|223926.6.peg.759"/>
<dbReference type="eggNOG" id="COG2981">
    <property type="taxonomic scope" value="Bacteria"/>
</dbReference>
<dbReference type="HOGENOM" id="CLU_070331_1_0_6"/>
<dbReference type="Proteomes" id="UP000002493">
    <property type="component" value="Chromosome 1"/>
</dbReference>
<dbReference type="GO" id="GO:0005886">
    <property type="term" value="C:plasma membrane"/>
    <property type="evidence" value="ECO:0007669"/>
    <property type="project" value="UniProtKB-SubCell"/>
</dbReference>
<dbReference type="GO" id="GO:0009675">
    <property type="term" value="F:high-affinity sulfate:proton symporter activity"/>
    <property type="evidence" value="ECO:0007669"/>
    <property type="project" value="TreeGrafter"/>
</dbReference>
<dbReference type="GO" id="GO:0019344">
    <property type="term" value="P:cysteine biosynthetic process"/>
    <property type="evidence" value="ECO:0007669"/>
    <property type="project" value="UniProtKB-UniRule"/>
</dbReference>
<dbReference type="GO" id="GO:0000103">
    <property type="term" value="P:sulfate assimilation"/>
    <property type="evidence" value="ECO:0007669"/>
    <property type="project" value="InterPro"/>
</dbReference>
<dbReference type="HAMAP" id="MF_00468">
    <property type="entry name" value="CysZ"/>
    <property type="match status" value="1"/>
</dbReference>
<dbReference type="InterPro" id="IPR050480">
    <property type="entry name" value="CysZ_sulfate_transptr"/>
</dbReference>
<dbReference type="InterPro" id="IPR022985">
    <property type="entry name" value="Sulfate_CysZ"/>
</dbReference>
<dbReference type="NCBIfam" id="NF003433">
    <property type="entry name" value="PRK04949.1"/>
    <property type="match status" value="1"/>
</dbReference>
<dbReference type="PANTHER" id="PTHR37468">
    <property type="entry name" value="SULFATE TRANSPORTER CYSZ"/>
    <property type="match status" value="1"/>
</dbReference>
<dbReference type="PANTHER" id="PTHR37468:SF1">
    <property type="entry name" value="SULFATE TRANSPORTER CYSZ"/>
    <property type="match status" value="1"/>
</dbReference>
<dbReference type="Pfam" id="PF07264">
    <property type="entry name" value="EI24"/>
    <property type="match status" value="1"/>
</dbReference>
<comment type="function">
    <text evidence="1">High affinity, high specificity proton-dependent sulfate transporter, which mediates sulfate uptake. Provides the sulfur source for the cysteine synthesis pathway.</text>
</comment>
<comment type="subcellular location">
    <subcellularLocation>
        <location evidence="1">Cell inner membrane</location>
        <topology evidence="1">Multi-pass membrane protein</topology>
    </subcellularLocation>
</comment>
<comment type="similarity">
    <text evidence="1">Belongs to the CysZ family.</text>
</comment>
<reference key="1">
    <citation type="journal article" date="2003" name="Lancet">
        <title>Genome sequence of Vibrio parahaemolyticus: a pathogenic mechanism distinct from that of V. cholerae.</title>
        <authorList>
            <person name="Makino K."/>
            <person name="Oshima K."/>
            <person name="Kurokawa K."/>
            <person name="Yokoyama K."/>
            <person name="Uda T."/>
            <person name="Tagomori K."/>
            <person name="Iijima Y."/>
            <person name="Najima M."/>
            <person name="Nakano M."/>
            <person name="Yamashita A."/>
            <person name="Kubota Y."/>
            <person name="Kimura S."/>
            <person name="Yasunaga T."/>
            <person name="Honda T."/>
            <person name="Shinagawa H."/>
            <person name="Hattori M."/>
            <person name="Iida T."/>
        </authorList>
    </citation>
    <scope>NUCLEOTIDE SEQUENCE [LARGE SCALE GENOMIC DNA]</scope>
    <source>
        <strain>RIMD 2210633</strain>
    </source>
</reference>
<gene>
    <name evidence="1" type="primary">cysZ</name>
    <name type="ordered locus">VP0798</name>
</gene>
<name>CYSZ_VIBPA</name>
<accession>Q87RJ6</accession>
<evidence type="ECO:0000255" key="1">
    <source>
        <dbReference type="HAMAP-Rule" id="MF_00468"/>
    </source>
</evidence>
<keyword id="KW-0028">Amino-acid biosynthesis</keyword>
<keyword id="KW-0997">Cell inner membrane</keyword>
<keyword id="KW-1003">Cell membrane</keyword>
<keyword id="KW-0198">Cysteine biosynthesis</keyword>
<keyword id="KW-0472">Membrane</keyword>
<keyword id="KW-0764">Sulfate transport</keyword>
<keyword id="KW-0812">Transmembrane</keyword>
<keyword id="KW-1133">Transmembrane helix</keyword>
<keyword id="KW-0813">Transport</keyword>
<sequence length="247" mass="28189">MKINNQQRTGFGYFLYGIQLALSPEIRRFVVLPLLANIILVGGAIFYLFSHLNMWIEGWIGQLPEFLSWLTYILWPLLALTILATFSYFFSTLANFIAAPFNGLLAEKVEETLTGKKINDDGFTAVLKDVPRVLAREWRKLLYILPKAIGLFLLLLIPALGQTVGPVLWFIFTAWMLAIQYCDYPFDNHKIPFNDMRYKLKQKQGKAYGFGVLVSVFTTIPILNLIVMPVAICGATAMWVAEFKHQR</sequence>